<accession>O04084</accession>
<accession>A4FVT3</accession>
<feature type="signal peptide" evidence="2">
    <location>
        <begin position="1"/>
        <end position="30"/>
    </location>
</feature>
<feature type="chain" id="PRO_0000274646" description="Serine carboxypeptidase-like 31">
    <location>
        <begin position="31"/>
        <end position="492"/>
    </location>
</feature>
<feature type="active site" evidence="3">
    <location>
        <position position="198"/>
    </location>
</feature>
<feature type="active site" evidence="3">
    <location>
        <position position="413"/>
    </location>
</feature>
<feature type="active site" evidence="3">
    <location>
        <position position="465"/>
    </location>
</feature>
<feature type="glycosylation site" description="N-linked (GlcNAc...) asparagine" evidence="2">
    <location>
        <position position="156"/>
    </location>
</feature>
<feature type="glycosylation site" description="N-linked (GlcNAc...) asparagine" evidence="2">
    <location>
        <position position="221"/>
    </location>
</feature>
<feature type="glycosylation site" description="N-linked (GlcNAc...) asparagine" evidence="2">
    <location>
        <position position="271"/>
    </location>
</feature>
<feature type="glycosylation site" description="N-linked (GlcNAc...) asparagine" evidence="2">
    <location>
        <position position="372"/>
    </location>
</feature>
<feature type="glycosylation site" description="N-linked (GlcNAc...) asparagine" evidence="2">
    <location>
        <position position="383"/>
    </location>
</feature>
<feature type="disulfide bond" evidence="1">
    <location>
        <begin position="105"/>
        <end position="376"/>
    </location>
</feature>
<feature type="disulfide bond" evidence="1">
    <location>
        <begin position="270"/>
        <end position="283"/>
    </location>
</feature>
<feature type="disulfide bond" evidence="1">
    <location>
        <begin position="307"/>
        <end position="344"/>
    </location>
</feature>
<feature type="sequence conflict" description="In Ref. 3; BT003972." evidence="5" ref="3">
    <original>S</original>
    <variation>P</variation>
    <location>
        <position position="224"/>
    </location>
</feature>
<feature type="sequence conflict" description="In Ref. 3; BT003972." evidence="5" ref="3">
    <original>P</original>
    <variation>H</variation>
    <location>
        <position position="237"/>
    </location>
</feature>
<dbReference type="EC" id="3.4.16.-"/>
<dbReference type="EMBL" id="U95973">
    <property type="protein sequence ID" value="AAB65475.1"/>
    <property type="status" value="ALT_SEQ"/>
    <property type="molecule type" value="Genomic_DNA"/>
</dbReference>
<dbReference type="EMBL" id="CP002684">
    <property type="protein sequence ID" value="AEE28680.1"/>
    <property type="molecule type" value="Genomic_DNA"/>
</dbReference>
<dbReference type="EMBL" id="BT003972">
    <property type="status" value="NOT_ANNOTATED_CDS"/>
    <property type="molecule type" value="mRNA"/>
</dbReference>
<dbReference type="EMBL" id="BT030381">
    <property type="protein sequence ID" value="ABO38794.1"/>
    <property type="molecule type" value="mRNA"/>
</dbReference>
<dbReference type="PIR" id="G86244">
    <property type="entry name" value="G86244"/>
</dbReference>
<dbReference type="RefSeq" id="NP_172575.2">
    <molecule id="O04084-1"/>
    <property type="nucleotide sequence ID" value="NM_100981.4"/>
</dbReference>
<dbReference type="SMR" id="O04084"/>
<dbReference type="STRING" id="3702.O04084"/>
<dbReference type="ESTHER" id="arath-SCP31">
    <property type="family name" value="Carboxypeptidase_S10"/>
</dbReference>
<dbReference type="MEROPS" id="S10.A36"/>
<dbReference type="GlyCosmos" id="O04084">
    <property type="glycosylation" value="5 sites, No reported glycans"/>
</dbReference>
<dbReference type="GlyGen" id="O04084">
    <property type="glycosylation" value="5 sites"/>
</dbReference>
<dbReference type="PaxDb" id="3702-AT1G11080.2"/>
<dbReference type="EnsemblPlants" id="AT1G11080.1">
    <molecule id="O04084-1"/>
    <property type="protein sequence ID" value="AT1G11080.1"/>
    <property type="gene ID" value="AT1G11080"/>
</dbReference>
<dbReference type="GeneID" id="837649"/>
<dbReference type="Gramene" id="AT1G11080.1">
    <molecule id="O04084-1"/>
    <property type="protein sequence ID" value="AT1G11080.1"/>
    <property type="gene ID" value="AT1G11080"/>
</dbReference>
<dbReference type="KEGG" id="ath:AT1G11080"/>
<dbReference type="Araport" id="AT1G11080"/>
<dbReference type="TAIR" id="AT1G11080">
    <property type="gene designation" value="SCPL31"/>
</dbReference>
<dbReference type="eggNOG" id="KOG1282">
    <property type="taxonomic scope" value="Eukaryota"/>
</dbReference>
<dbReference type="HOGENOM" id="CLU_008523_13_0_1"/>
<dbReference type="InParanoid" id="O04084"/>
<dbReference type="OMA" id="FNTNIMY"/>
<dbReference type="OrthoDB" id="443318at2759"/>
<dbReference type="PRO" id="PR:O04084"/>
<dbReference type="Proteomes" id="UP000006548">
    <property type="component" value="Chromosome 1"/>
</dbReference>
<dbReference type="ExpressionAtlas" id="O04084">
    <property type="expression patterns" value="baseline and differential"/>
</dbReference>
<dbReference type="GO" id="GO:0005576">
    <property type="term" value="C:extracellular region"/>
    <property type="evidence" value="ECO:0007669"/>
    <property type="project" value="UniProtKB-SubCell"/>
</dbReference>
<dbReference type="GO" id="GO:0004185">
    <property type="term" value="F:serine-type carboxypeptidase activity"/>
    <property type="evidence" value="ECO:0007669"/>
    <property type="project" value="InterPro"/>
</dbReference>
<dbReference type="GO" id="GO:0006508">
    <property type="term" value="P:proteolysis"/>
    <property type="evidence" value="ECO:0007669"/>
    <property type="project" value="UniProtKB-KW"/>
</dbReference>
<dbReference type="FunFam" id="3.40.50.11320:FF:000001">
    <property type="entry name" value="Carboxypeptidase"/>
    <property type="match status" value="1"/>
</dbReference>
<dbReference type="FunFam" id="3.40.50.1820:FF:000030">
    <property type="entry name" value="Carboxypeptidase"/>
    <property type="match status" value="1"/>
</dbReference>
<dbReference type="Gene3D" id="3.40.50.11320">
    <property type="match status" value="1"/>
</dbReference>
<dbReference type="Gene3D" id="6.10.250.940">
    <property type="match status" value="1"/>
</dbReference>
<dbReference type="Gene3D" id="3.40.50.1820">
    <property type="entry name" value="alpha/beta hydrolase"/>
    <property type="match status" value="1"/>
</dbReference>
<dbReference type="InterPro" id="IPR029058">
    <property type="entry name" value="AB_hydrolase_fold"/>
</dbReference>
<dbReference type="InterPro" id="IPR001563">
    <property type="entry name" value="Peptidase_S10"/>
</dbReference>
<dbReference type="InterPro" id="IPR018202">
    <property type="entry name" value="Ser_caboxypep_ser_AS"/>
</dbReference>
<dbReference type="PANTHER" id="PTHR11802:SF497">
    <property type="entry name" value="SERINE CARBOXYPEPTIDASE-LIKE 31-RELATED"/>
    <property type="match status" value="1"/>
</dbReference>
<dbReference type="PANTHER" id="PTHR11802">
    <property type="entry name" value="SERINE PROTEASE FAMILY S10 SERINE CARBOXYPEPTIDASE"/>
    <property type="match status" value="1"/>
</dbReference>
<dbReference type="Pfam" id="PF00450">
    <property type="entry name" value="Peptidase_S10"/>
    <property type="match status" value="1"/>
</dbReference>
<dbReference type="PRINTS" id="PR00724">
    <property type="entry name" value="CRBOXYPTASEC"/>
</dbReference>
<dbReference type="SUPFAM" id="SSF53474">
    <property type="entry name" value="alpha/beta-Hydrolases"/>
    <property type="match status" value="1"/>
</dbReference>
<dbReference type="PROSITE" id="PS00131">
    <property type="entry name" value="CARBOXYPEPT_SER_SER"/>
    <property type="match status" value="1"/>
</dbReference>
<sequence>MDNYQTKNISNLLTSLCFTTLLILAPVVICTRQHRFDSPKRSLLANEQDLVTGLPGQPDVSFRHYAGYVPVDESNGRAMFYWFFEAMDLPKEKPLVLWLNGGPGCSSVGYGATQEIGPFLVDTNGNGLNFNPYAWNKEANMLFLESPVGVGFSYSNTSSDYQKLGDDFTARDAYTFLCNWFEKFPEHKENTFYIAGESYAGKYVPELAEVVYDNNNNNKKNGSSFHINLKGILLGNPETSDAEDWRGWVDYAWSHAVISDETHRIITRTCNFSSDNTWSNDECNEAVAEVLKQYHEIDIYSIYTSVCIGDSARSSYFDSAQFKTNSRISSKRMPPRLMGGYDPCLDDYARVFYNRADVQKSLHASDGVNLKNWSICNMEIFNNWTGSNPSVLPIYEKLIAGGLRIWVYSGDTDGRVPVLATRYSLNALELPIKTAWRPWYHEKQVSGWLQEYEGLTFATFRGAGHAVPCFKPSSSLAFFSAFLSGVPPPPSR</sequence>
<proteinExistence type="evidence at transcript level"/>
<organism>
    <name type="scientific">Arabidopsis thaliana</name>
    <name type="common">Mouse-ear cress</name>
    <dbReference type="NCBI Taxonomy" id="3702"/>
    <lineage>
        <taxon>Eukaryota</taxon>
        <taxon>Viridiplantae</taxon>
        <taxon>Streptophyta</taxon>
        <taxon>Embryophyta</taxon>
        <taxon>Tracheophyta</taxon>
        <taxon>Spermatophyta</taxon>
        <taxon>Magnoliopsida</taxon>
        <taxon>eudicotyledons</taxon>
        <taxon>Gunneridae</taxon>
        <taxon>Pentapetalae</taxon>
        <taxon>rosids</taxon>
        <taxon>malvids</taxon>
        <taxon>Brassicales</taxon>
        <taxon>Brassicaceae</taxon>
        <taxon>Camelineae</taxon>
        <taxon>Arabidopsis</taxon>
    </lineage>
</organism>
<name>SCP31_ARATH</name>
<protein>
    <recommendedName>
        <fullName>Serine carboxypeptidase-like 31</fullName>
        <ecNumber>3.4.16.-</ecNumber>
    </recommendedName>
</protein>
<comment type="function">
    <text evidence="1">Probable carboxypeptidase.</text>
</comment>
<comment type="subcellular location">
    <subcellularLocation>
        <location evidence="5">Secreted</location>
    </subcellularLocation>
</comment>
<comment type="alternative products">
    <event type="alternative splicing"/>
    <isoform>
        <id>O04084-1</id>
        <name>1</name>
        <sequence type="displayed"/>
    </isoform>
    <text>A number of isoforms are produced. According to EST sequences.</text>
</comment>
<comment type="tissue specificity">
    <text evidence="4">Expressed in roots, senescent leaves, stems, flowers and siliques.</text>
</comment>
<comment type="similarity">
    <text evidence="5">Belongs to the peptidase S10 family.</text>
</comment>
<comment type="sequence caution" evidence="5">
    <conflict type="erroneous gene model prediction">
        <sequence resource="EMBL-CDS" id="AAB65475"/>
    </conflict>
</comment>
<comment type="sequence caution" evidence="5">
    <conflict type="frameshift">
        <sequence resource="EMBL" id="BT003972"/>
    </conflict>
</comment>
<gene>
    <name type="primary">SCPL31</name>
    <name type="ordered locus">At1g11080</name>
    <name type="ORF">T19D16.4</name>
</gene>
<reference key="1">
    <citation type="journal article" date="2000" name="Nature">
        <title>Sequence and analysis of chromosome 1 of the plant Arabidopsis thaliana.</title>
        <authorList>
            <person name="Theologis A."/>
            <person name="Ecker J.R."/>
            <person name="Palm C.J."/>
            <person name="Federspiel N.A."/>
            <person name="Kaul S."/>
            <person name="White O."/>
            <person name="Alonso J."/>
            <person name="Altafi H."/>
            <person name="Araujo R."/>
            <person name="Bowman C.L."/>
            <person name="Brooks S.Y."/>
            <person name="Buehler E."/>
            <person name="Chan A."/>
            <person name="Chao Q."/>
            <person name="Chen H."/>
            <person name="Cheuk R.F."/>
            <person name="Chin C.W."/>
            <person name="Chung M.K."/>
            <person name="Conn L."/>
            <person name="Conway A.B."/>
            <person name="Conway A.R."/>
            <person name="Creasy T.H."/>
            <person name="Dewar K."/>
            <person name="Dunn P."/>
            <person name="Etgu P."/>
            <person name="Feldblyum T.V."/>
            <person name="Feng J.-D."/>
            <person name="Fong B."/>
            <person name="Fujii C.Y."/>
            <person name="Gill J.E."/>
            <person name="Goldsmith A.D."/>
            <person name="Haas B."/>
            <person name="Hansen N.F."/>
            <person name="Hughes B."/>
            <person name="Huizar L."/>
            <person name="Hunter J.L."/>
            <person name="Jenkins J."/>
            <person name="Johnson-Hopson C."/>
            <person name="Khan S."/>
            <person name="Khaykin E."/>
            <person name="Kim C.J."/>
            <person name="Koo H.L."/>
            <person name="Kremenetskaia I."/>
            <person name="Kurtz D.B."/>
            <person name="Kwan A."/>
            <person name="Lam B."/>
            <person name="Langin-Hooper S."/>
            <person name="Lee A."/>
            <person name="Lee J.M."/>
            <person name="Lenz C.A."/>
            <person name="Li J.H."/>
            <person name="Li Y.-P."/>
            <person name="Lin X."/>
            <person name="Liu S.X."/>
            <person name="Liu Z.A."/>
            <person name="Luros J.S."/>
            <person name="Maiti R."/>
            <person name="Marziali A."/>
            <person name="Militscher J."/>
            <person name="Miranda M."/>
            <person name="Nguyen M."/>
            <person name="Nierman W.C."/>
            <person name="Osborne B.I."/>
            <person name="Pai G."/>
            <person name="Peterson J."/>
            <person name="Pham P.K."/>
            <person name="Rizzo M."/>
            <person name="Rooney T."/>
            <person name="Rowley D."/>
            <person name="Sakano H."/>
            <person name="Salzberg S.L."/>
            <person name="Schwartz J.R."/>
            <person name="Shinn P."/>
            <person name="Southwick A.M."/>
            <person name="Sun H."/>
            <person name="Tallon L.J."/>
            <person name="Tambunga G."/>
            <person name="Toriumi M.J."/>
            <person name="Town C.D."/>
            <person name="Utterback T."/>
            <person name="Van Aken S."/>
            <person name="Vaysberg M."/>
            <person name="Vysotskaia V.S."/>
            <person name="Walker M."/>
            <person name="Wu D."/>
            <person name="Yu G."/>
            <person name="Fraser C.M."/>
            <person name="Venter J.C."/>
            <person name="Davis R.W."/>
        </authorList>
    </citation>
    <scope>NUCLEOTIDE SEQUENCE [LARGE SCALE GENOMIC DNA]</scope>
    <source>
        <strain>cv. Columbia</strain>
    </source>
</reference>
<reference key="2">
    <citation type="journal article" date="2017" name="Plant J.">
        <title>Araport11: a complete reannotation of the Arabidopsis thaliana reference genome.</title>
        <authorList>
            <person name="Cheng C.Y."/>
            <person name="Krishnakumar V."/>
            <person name="Chan A.P."/>
            <person name="Thibaud-Nissen F."/>
            <person name="Schobel S."/>
            <person name="Town C.D."/>
        </authorList>
    </citation>
    <scope>GENOME REANNOTATION</scope>
    <source>
        <strain>cv. Columbia</strain>
    </source>
</reference>
<reference key="3">
    <citation type="journal article" date="2003" name="Science">
        <title>Empirical analysis of transcriptional activity in the Arabidopsis genome.</title>
        <authorList>
            <person name="Yamada K."/>
            <person name="Lim J."/>
            <person name="Dale J.M."/>
            <person name="Chen H."/>
            <person name="Shinn P."/>
            <person name="Palm C.J."/>
            <person name="Southwick A.M."/>
            <person name="Wu H.C."/>
            <person name="Kim C.J."/>
            <person name="Nguyen M."/>
            <person name="Pham P.K."/>
            <person name="Cheuk R.F."/>
            <person name="Karlin-Newmann G."/>
            <person name="Liu S.X."/>
            <person name="Lam B."/>
            <person name="Sakano H."/>
            <person name="Wu T."/>
            <person name="Yu G."/>
            <person name="Miranda M."/>
            <person name="Quach H.L."/>
            <person name="Tripp M."/>
            <person name="Chang C.H."/>
            <person name="Lee J.M."/>
            <person name="Toriumi M.J."/>
            <person name="Chan M.M."/>
            <person name="Tang C.C."/>
            <person name="Onodera C.S."/>
            <person name="Deng J.M."/>
            <person name="Akiyama K."/>
            <person name="Ansari Y."/>
            <person name="Arakawa T."/>
            <person name="Banh J."/>
            <person name="Banno F."/>
            <person name="Bowser L."/>
            <person name="Brooks S.Y."/>
            <person name="Carninci P."/>
            <person name="Chao Q."/>
            <person name="Choy N."/>
            <person name="Enju A."/>
            <person name="Goldsmith A.D."/>
            <person name="Gurjal M."/>
            <person name="Hansen N.F."/>
            <person name="Hayashizaki Y."/>
            <person name="Johnson-Hopson C."/>
            <person name="Hsuan V.W."/>
            <person name="Iida K."/>
            <person name="Karnes M."/>
            <person name="Khan S."/>
            <person name="Koesema E."/>
            <person name="Ishida J."/>
            <person name="Jiang P.X."/>
            <person name="Jones T."/>
            <person name="Kawai J."/>
            <person name="Kamiya A."/>
            <person name="Meyers C."/>
            <person name="Nakajima M."/>
            <person name="Narusaka M."/>
            <person name="Seki M."/>
            <person name="Sakurai T."/>
            <person name="Satou M."/>
            <person name="Tamse R."/>
            <person name="Vaysberg M."/>
            <person name="Wallender E.K."/>
            <person name="Wong C."/>
            <person name="Yamamura Y."/>
            <person name="Yuan S."/>
            <person name="Shinozaki K."/>
            <person name="Davis R.W."/>
            <person name="Theologis A."/>
            <person name="Ecker J.R."/>
        </authorList>
    </citation>
    <scope>NUCLEOTIDE SEQUENCE [LARGE SCALE MRNA]</scope>
    <source>
        <strain>cv. Columbia</strain>
    </source>
</reference>
<reference key="4">
    <citation type="submission" date="2007-03" db="EMBL/GenBank/DDBJ databases">
        <title>Arabidopsis ORF clones.</title>
        <authorList>
            <person name="Bautista V.R."/>
            <person name="Kim C.J."/>
            <person name="Chen H."/>
            <person name="Wu S.Y."/>
            <person name="De Los Reyes C."/>
            <person name="Ecker J.R."/>
        </authorList>
    </citation>
    <scope>NUCLEOTIDE SEQUENCE [LARGE SCALE MRNA]</scope>
    <source>
        <strain>cv. Columbia</strain>
    </source>
</reference>
<reference key="5">
    <citation type="journal article" date="2005" name="Plant Physiol.">
        <title>An expression and bioinformatics analysis of the Arabidopsis serine carboxypeptidase-like gene family.</title>
        <authorList>
            <person name="Fraser C.M."/>
            <person name="Rider L.W."/>
            <person name="Chapple C."/>
        </authorList>
    </citation>
    <scope>GENE FAMILY</scope>
    <scope>TISSUE SPECIFICITY</scope>
    <scope>NOMENCLATURE</scope>
</reference>
<keyword id="KW-0025">Alternative splicing</keyword>
<keyword id="KW-0121">Carboxypeptidase</keyword>
<keyword id="KW-1015">Disulfide bond</keyword>
<keyword id="KW-0325">Glycoprotein</keyword>
<keyword id="KW-0378">Hydrolase</keyword>
<keyword id="KW-0645">Protease</keyword>
<keyword id="KW-1185">Reference proteome</keyword>
<keyword id="KW-0964">Secreted</keyword>
<keyword id="KW-0732">Signal</keyword>
<evidence type="ECO:0000250" key="1"/>
<evidence type="ECO:0000255" key="2"/>
<evidence type="ECO:0000255" key="3">
    <source>
        <dbReference type="PROSITE-ProRule" id="PRU10074"/>
    </source>
</evidence>
<evidence type="ECO:0000269" key="4">
    <source>
    </source>
</evidence>
<evidence type="ECO:0000305" key="5"/>